<accession>Q2SWY8</accession>
<keyword id="KW-0012">Acyltransferase</keyword>
<keyword id="KW-0441">Lipid A biosynthesis</keyword>
<keyword id="KW-0444">Lipid biosynthesis</keyword>
<keyword id="KW-0443">Lipid metabolism</keyword>
<keyword id="KW-0677">Repeat</keyword>
<keyword id="KW-0808">Transferase</keyword>
<sequence>MALTLEALVARFGGEIVGDGRREVGGLAPLDQAGPQHLAFLANPKYLAQVETTAAGAVLIAPRDLEKLGAAANGRNFIITPNPYAYFARVAQMFIDLAAPQRAAGVHPSATIDPAAQVAASAVIGPHVSVEAGAVIGERVQLDANVFVGRGTRIGDDSHLYPNVTIYHGCTLGPRAIVHSGAVIGSDGFGFAPDFVGEGDARTGAWVKIPQVGGVKVGPDVEIGANTTIDRGAMADTVIDECVKIDNLVQIGHNCRIGAYTVIAGCAGIAGSTTIGKHCMIGGAVGVAGHVTLGDYVIVTAKSGVSKSLPKAGIYTSAFPAVEHGDWNKSAALVRNLDKLRDRIKALETALAAREGDAGGA</sequence>
<feature type="chain" id="PRO_0000264353" description="UDP-3-O-acylglucosamine N-acyltransferase">
    <location>
        <begin position="1"/>
        <end position="361"/>
    </location>
</feature>
<feature type="active site" description="Proton acceptor" evidence="1">
    <location>
        <position position="253"/>
    </location>
</feature>
<reference key="1">
    <citation type="journal article" date="2005" name="BMC Genomics">
        <title>Bacterial genome adaptation to niches: divergence of the potential virulence genes in three Burkholderia species of different survival strategies.</title>
        <authorList>
            <person name="Kim H.S."/>
            <person name="Schell M.A."/>
            <person name="Yu Y."/>
            <person name="Ulrich R.L."/>
            <person name="Sarria S.H."/>
            <person name="Nierman W.C."/>
            <person name="DeShazer D."/>
        </authorList>
    </citation>
    <scope>NUCLEOTIDE SEQUENCE [LARGE SCALE GENOMIC DNA]</scope>
    <source>
        <strain>ATCC 700388 / DSM 13276 / CCUG 48851 / CIP 106301 / E264</strain>
    </source>
</reference>
<dbReference type="EC" id="2.3.1.191" evidence="1"/>
<dbReference type="EMBL" id="CP000086">
    <property type="protein sequence ID" value="ABC36384.1"/>
    <property type="molecule type" value="Genomic_DNA"/>
</dbReference>
<dbReference type="RefSeq" id="WP_009890454.1">
    <property type="nucleotide sequence ID" value="NC_007651.1"/>
</dbReference>
<dbReference type="SMR" id="Q2SWY8"/>
<dbReference type="GeneID" id="45121765"/>
<dbReference type="KEGG" id="bte:BTH_I2037"/>
<dbReference type="HOGENOM" id="CLU_049865_0_1_4"/>
<dbReference type="UniPathway" id="UPA00973"/>
<dbReference type="Proteomes" id="UP000001930">
    <property type="component" value="Chromosome I"/>
</dbReference>
<dbReference type="GO" id="GO:0016020">
    <property type="term" value="C:membrane"/>
    <property type="evidence" value="ECO:0007669"/>
    <property type="project" value="GOC"/>
</dbReference>
<dbReference type="GO" id="GO:0016410">
    <property type="term" value="F:N-acyltransferase activity"/>
    <property type="evidence" value="ECO:0007669"/>
    <property type="project" value="InterPro"/>
</dbReference>
<dbReference type="GO" id="GO:0009245">
    <property type="term" value="P:lipid A biosynthetic process"/>
    <property type="evidence" value="ECO:0007669"/>
    <property type="project" value="UniProtKB-UniRule"/>
</dbReference>
<dbReference type="CDD" id="cd03352">
    <property type="entry name" value="LbH_LpxD"/>
    <property type="match status" value="1"/>
</dbReference>
<dbReference type="Gene3D" id="1.20.5.170">
    <property type="match status" value="1"/>
</dbReference>
<dbReference type="Gene3D" id="2.160.10.10">
    <property type="entry name" value="Hexapeptide repeat proteins"/>
    <property type="match status" value="1"/>
</dbReference>
<dbReference type="Gene3D" id="3.40.1390.10">
    <property type="entry name" value="MurE/MurF, N-terminal domain"/>
    <property type="match status" value="1"/>
</dbReference>
<dbReference type="HAMAP" id="MF_00523">
    <property type="entry name" value="LpxD"/>
    <property type="match status" value="1"/>
</dbReference>
<dbReference type="InterPro" id="IPR001451">
    <property type="entry name" value="Hexapep"/>
</dbReference>
<dbReference type="InterPro" id="IPR018357">
    <property type="entry name" value="Hexapep_transf_CS"/>
</dbReference>
<dbReference type="InterPro" id="IPR007691">
    <property type="entry name" value="LpxD"/>
</dbReference>
<dbReference type="InterPro" id="IPR011004">
    <property type="entry name" value="Trimer_LpxA-like_sf"/>
</dbReference>
<dbReference type="InterPro" id="IPR020573">
    <property type="entry name" value="UDP_GlcNAc_AcTrfase_non-rep"/>
</dbReference>
<dbReference type="NCBIfam" id="TIGR01853">
    <property type="entry name" value="lipid_A_lpxD"/>
    <property type="match status" value="1"/>
</dbReference>
<dbReference type="NCBIfam" id="NF002060">
    <property type="entry name" value="PRK00892.1"/>
    <property type="match status" value="1"/>
</dbReference>
<dbReference type="PANTHER" id="PTHR43378">
    <property type="entry name" value="UDP-3-O-ACYLGLUCOSAMINE N-ACYLTRANSFERASE"/>
    <property type="match status" value="1"/>
</dbReference>
<dbReference type="PANTHER" id="PTHR43378:SF2">
    <property type="entry name" value="UDP-3-O-ACYLGLUCOSAMINE N-ACYLTRANSFERASE 1, MITOCHONDRIAL-RELATED"/>
    <property type="match status" value="1"/>
</dbReference>
<dbReference type="Pfam" id="PF00132">
    <property type="entry name" value="Hexapep"/>
    <property type="match status" value="2"/>
</dbReference>
<dbReference type="Pfam" id="PF14602">
    <property type="entry name" value="Hexapep_2"/>
    <property type="match status" value="1"/>
</dbReference>
<dbReference type="Pfam" id="PF04613">
    <property type="entry name" value="LpxD"/>
    <property type="match status" value="1"/>
</dbReference>
<dbReference type="SUPFAM" id="SSF51161">
    <property type="entry name" value="Trimeric LpxA-like enzymes"/>
    <property type="match status" value="1"/>
</dbReference>
<dbReference type="PROSITE" id="PS00101">
    <property type="entry name" value="HEXAPEP_TRANSFERASES"/>
    <property type="match status" value="4"/>
</dbReference>
<gene>
    <name evidence="1" type="primary">lpxD</name>
    <name type="ordered locus">BTH_I2037</name>
</gene>
<evidence type="ECO:0000255" key="1">
    <source>
        <dbReference type="HAMAP-Rule" id="MF_00523"/>
    </source>
</evidence>
<proteinExistence type="inferred from homology"/>
<name>LPXD_BURTA</name>
<organism>
    <name type="scientific">Burkholderia thailandensis (strain ATCC 700388 / DSM 13276 / CCUG 48851 / CIP 106301 / E264)</name>
    <dbReference type="NCBI Taxonomy" id="271848"/>
    <lineage>
        <taxon>Bacteria</taxon>
        <taxon>Pseudomonadati</taxon>
        <taxon>Pseudomonadota</taxon>
        <taxon>Betaproteobacteria</taxon>
        <taxon>Burkholderiales</taxon>
        <taxon>Burkholderiaceae</taxon>
        <taxon>Burkholderia</taxon>
        <taxon>pseudomallei group</taxon>
    </lineage>
</organism>
<protein>
    <recommendedName>
        <fullName evidence="1">UDP-3-O-acylglucosamine N-acyltransferase</fullName>
        <ecNumber evidence="1">2.3.1.191</ecNumber>
    </recommendedName>
</protein>
<comment type="function">
    <text evidence="1">Catalyzes the N-acylation of UDP-3-O-acylglucosamine using 3-hydroxyacyl-ACP as the acyl donor. Is involved in the biosynthesis of lipid A, a phosphorylated glycolipid that anchors the lipopolysaccharide to the outer membrane of the cell.</text>
</comment>
<comment type="catalytic activity">
    <reaction evidence="1">
        <text>a UDP-3-O-[(3R)-3-hydroxyacyl]-alpha-D-glucosamine + a (3R)-hydroxyacyl-[ACP] = a UDP-2-N,3-O-bis[(3R)-3-hydroxyacyl]-alpha-D-glucosamine + holo-[ACP] + H(+)</text>
        <dbReference type="Rhea" id="RHEA:53836"/>
        <dbReference type="Rhea" id="RHEA-COMP:9685"/>
        <dbReference type="Rhea" id="RHEA-COMP:9945"/>
        <dbReference type="ChEBI" id="CHEBI:15378"/>
        <dbReference type="ChEBI" id="CHEBI:64479"/>
        <dbReference type="ChEBI" id="CHEBI:78827"/>
        <dbReference type="ChEBI" id="CHEBI:137740"/>
        <dbReference type="ChEBI" id="CHEBI:137748"/>
        <dbReference type="EC" id="2.3.1.191"/>
    </reaction>
</comment>
<comment type="pathway">
    <text evidence="1">Bacterial outer membrane biogenesis; LPS lipid A biosynthesis.</text>
</comment>
<comment type="subunit">
    <text evidence="1">Homotrimer.</text>
</comment>
<comment type="similarity">
    <text evidence="1">Belongs to the transferase hexapeptide repeat family. LpxD subfamily.</text>
</comment>